<organism>
    <name type="scientific">Citrus limon</name>
    <name type="common">Lemon</name>
    <name type="synonym">Citrus medica var. limon</name>
    <dbReference type="NCBI Taxonomy" id="2708"/>
    <lineage>
        <taxon>Eukaryota</taxon>
        <taxon>Viridiplantae</taxon>
        <taxon>Streptophyta</taxon>
        <taxon>Embryophyta</taxon>
        <taxon>Tracheophyta</taxon>
        <taxon>Spermatophyta</taxon>
        <taxon>Magnoliopsida</taxon>
        <taxon>eudicotyledons</taxon>
        <taxon>Gunneridae</taxon>
        <taxon>Pentapetalae</taxon>
        <taxon>rosids</taxon>
        <taxon>malvids</taxon>
        <taxon>Sapindales</taxon>
        <taxon>Rutaceae</taxon>
        <taxon>Aurantioideae</taxon>
        <taxon>Citrus</taxon>
    </lineage>
</organism>
<dbReference type="EC" id="4.2.3.20" evidence="3"/>
<dbReference type="EMBL" id="AF514287">
    <property type="protein sequence ID" value="AAM53944.1"/>
    <property type="molecule type" value="mRNA"/>
</dbReference>
<dbReference type="SMR" id="Q8L5K3"/>
<dbReference type="KEGG" id="ag:AAM53944"/>
<dbReference type="BRENDA" id="4.2.3.20">
    <property type="organism ID" value="1413"/>
</dbReference>
<dbReference type="GO" id="GO:0009507">
    <property type="term" value="C:chloroplast"/>
    <property type="evidence" value="ECO:0007669"/>
    <property type="project" value="UniProtKB-SubCell"/>
</dbReference>
<dbReference type="GO" id="GO:0034002">
    <property type="term" value="F:(R)-limonene synthase activity"/>
    <property type="evidence" value="ECO:0007669"/>
    <property type="project" value="UniProtKB-EC"/>
</dbReference>
<dbReference type="GO" id="GO:0000287">
    <property type="term" value="F:magnesium ion binding"/>
    <property type="evidence" value="ECO:0007669"/>
    <property type="project" value="InterPro"/>
</dbReference>
<dbReference type="GO" id="GO:0016102">
    <property type="term" value="P:diterpenoid biosynthetic process"/>
    <property type="evidence" value="ECO:0007669"/>
    <property type="project" value="InterPro"/>
</dbReference>
<dbReference type="CDD" id="cd00684">
    <property type="entry name" value="Terpene_cyclase_plant_C1"/>
    <property type="match status" value="1"/>
</dbReference>
<dbReference type="FunFam" id="1.10.600.10:FF:000007">
    <property type="entry name" value="Isoprene synthase, chloroplastic"/>
    <property type="match status" value="1"/>
</dbReference>
<dbReference type="FunFam" id="1.50.10.130:FF:000001">
    <property type="entry name" value="Isoprene synthase, chloroplastic"/>
    <property type="match status" value="1"/>
</dbReference>
<dbReference type="Gene3D" id="1.10.600.10">
    <property type="entry name" value="Farnesyl Diphosphate Synthase"/>
    <property type="match status" value="1"/>
</dbReference>
<dbReference type="Gene3D" id="1.50.10.130">
    <property type="entry name" value="Terpene synthase, N-terminal domain"/>
    <property type="match status" value="1"/>
</dbReference>
<dbReference type="InterPro" id="IPR008949">
    <property type="entry name" value="Isoprenoid_synthase_dom_sf"/>
</dbReference>
<dbReference type="InterPro" id="IPR034741">
    <property type="entry name" value="Terpene_cyclase-like_1_C"/>
</dbReference>
<dbReference type="InterPro" id="IPR044814">
    <property type="entry name" value="Terpene_cyclase_plant_C1"/>
</dbReference>
<dbReference type="InterPro" id="IPR001906">
    <property type="entry name" value="Terpene_synth_N"/>
</dbReference>
<dbReference type="InterPro" id="IPR036965">
    <property type="entry name" value="Terpene_synth_N_sf"/>
</dbReference>
<dbReference type="InterPro" id="IPR050148">
    <property type="entry name" value="Terpene_synthase-like"/>
</dbReference>
<dbReference type="InterPro" id="IPR005630">
    <property type="entry name" value="Terpene_synthase_metal-bd"/>
</dbReference>
<dbReference type="InterPro" id="IPR008930">
    <property type="entry name" value="Terpenoid_cyclase/PrenylTrfase"/>
</dbReference>
<dbReference type="PANTHER" id="PTHR31225:SF245">
    <property type="entry name" value="(-)-ALPHA-TERPINEOL SYNTHASE-LIKE"/>
    <property type="match status" value="1"/>
</dbReference>
<dbReference type="PANTHER" id="PTHR31225">
    <property type="entry name" value="OS04G0344100 PROTEIN-RELATED"/>
    <property type="match status" value="1"/>
</dbReference>
<dbReference type="Pfam" id="PF01397">
    <property type="entry name" value="Terpene_synth"/>
    <property type="match status" value="1"/>
</dbReference>
<dbReference type="Pfam" id="PF03936">
    <property type="entry name" value="Terpene_synth_C"/>
    <property type="match status" value="1"/>
</dbReference>
<dbReference type="SFLD" id="SFLDS00005">
    <property type="entry name" value="Isoprenoid_Synthase_Type_I"/>
    <property type="match status" value="1"/>
</dbReference>
<dbReference type="SFLD" id="SFLDG01019">
    <property type="entry name" value="Terpene_Cyclase_Like_1_C_Termi"/>
    <property type="match status" value="1"/>
</dbReference>
<dbReference type="SUPFAM" id="SSF48239">
    <property type="entry name" value="Terpenoid cyclases/Protein prenyltransferases"/>
    <property type="match status" value="1"/>
</dbReference>
<dbReference type="SUPFAM" id="SSF48576">
    <property type="entry name" value="Terpenoid synthases"/>
    <property type="match status" value="1"/>
</dbReference>
<reference key="1">
    <citation type="journal article" date="2002" name="Eur. J. Biochem.">
        <title>Monoterpene biosynthesis in lemon (Citrus limon): cDNA isolation and functional analysis of four monoterpene synthases.</title>
        <authorList>
            <person name="Lucker J."/>
            <person name="El Tamer M.K."/>
            <person name="Schwab W."/>
            <person name="Verstappen F.W.A."/>
            <person name="van der Plas L.H.W."/>
            <person name="Bouwmeester H.J."/>
            <person name="Verhoeven H.A."/>
        </authorList>
    </citation>
    <scope>NUCLEOTIDE SEQUENCE [MRNA]</scope>
    <source>
        <strain>cv. C62</strain>
        <tissue>Peelings</tissue>
    </source>
</reference>
<name>RLC1_CITLI</name>
<evidence type="ECO:0000250" key="1">
    <source>
        <dbReference type="UniProtKB" id="A0A1C9J6A7"/>
    </source>
</evidence>
<evidence type="ECO:0000255" key="2"/>
<evidence type="ECO:0000269" key="3">
    <source>
    </source>
</evidence>
<evidence type="ECO:0000303" key="4">
    <source>
    </source>
</evidence>
<evidence type="ECO:0000305" key="5"/>
<protein>
    <recommendedName>
        <fullName evidence="4">(R)-limonene synthase 1, chloroplastic</fullName>
        <ecNumber evidence="3">4.2.3.20</ecNumber>
    </recommendedName>
    <alternativeName>
        <fullName evidence="4">(+)-limonene synthase 1</fullName>
    </alternativeName>
</protein>
<keyword id="KW-0150">Chloroplast</keyword>
<keyword id="KW-0456">Lyase</keyword>
<keyword id="KW-0460">Magnesium</keyword>
<keyword id="KW-0464">Manganese</keyword>
<keyword id="KW-0479">Metal-binding</keyword>
<keyword id="KW-0934">Plastid</keyword>
<keyword id="KW-0809">Transit peptide</keyword>
<sequence length="606" mass="70348">MSSCINPSTLVTSVNAFKCLPLATNKAAIRIMAKYKPVQCLISAKYDNLTVDRRSANYQPSIWDHDFLQSLNSNYTDEAYKRRAEELRGKVKIAIKDVIEPLDQLELIDNLQRLGLAHRFETEIRNILNNIYNNNKDYNWRKENLYATSLEFRLLRQHGYPVSQEVFNGFKDDQGGFICDDFKGILSLHEASYYSLEGESIMEEAWQFTSKHLKEVMISKNMEEDVFVAEQAKRALELPLHWKVPMLEARWFIHIYERREDKNHLLLELAKMEFNTLQAIYQEELKEISGWWKDTGLGEKLSFARNRLVASFLWSMGIAFEPQFAYCRRVLTISIALITVIDDIYDVYGTLDELEIFTDAVERWDINYALKHLPGYMKMCFLALYNFVNEFAYYVLKQQDFDLLLSIKNAWLGLIQAYLVEAKWYHSKYTPKLEEYLENGLVSITGPLIITISYLSGTNPIIKKELEFLESNPDIVHWSSKIFRLQDDLGTSSDEIQRGDVPKSIQCYMHETGASEEVARQHIKDMMRQMWKKVNAYTADKDSPLTGTTTEFLLNLVRMSHFMYLHGDGHGVQNQETIDVGFTLLFQPIPLEDKHMAFTASPGTKG</sequence>
<feature type="transit peptide" description="Chloroplast" evidence="2">
    <location>
        <begin position="1"/>
        <end position="32"/>
    </location>
</feature>
<feature type="chain" id="PRO_0000186452" description="(R)-limonene synthase 1, chloroplastic" evidence="2">
    <location>
        <begin position="33"/>
        <end position="606"/>
    </location>
</feature>
<feature type="short sequence motif" description="DDXXD motif" evidence="5">
    <location>
        <begin position="342"/>
        <end position="346"/>
    </location>
</feature>
<feature type="binding site" evidence="1">
    <location>
        <position position="342"/>
    </location>
    <ligand>
        <name>Mn(2+)</name>
        <dbReference type="ChEBI" id="CHEBI:29035"/>
        <label>1</label>
    </ligand>
</feature>
<feature type="binding site" evidence="1">
    <location>
        <position position="342"/>
    </location>
    <ligand>
        <name>Mn(2+)</name>
        <dbReference type="ChEBI" id="CHEBI:29035"/>
        <label>2</label>
    </ligand>
</feature>
<feature type="binding site" evidence="1">
    <location>
        <position position="342"/>
    </location>
    <ligand>
        <name>substrate</name>
    </ligand>
</feature>
<feature type="binding site" evidence="1">
    <location>
        <position position="346"/>
    </location>
    <ligand>
        <name>Mn(2+)</name>
        <dbReference type="ChEBI" id="CHEBI:29035"/>
        <label>1</label>
    </ligand>
</feature>
<feature type="binding site" evidence="1">
    <location>
        <position position="346"/>
    </location>
    <ligand>
        <name>Mn(2+)</name>
        <dbReference type="ChEBI" id="CHEBI:29035"/>
        <label>2</label>
    </ligand>
</feature>
<feature type="binding site" evidence="1">
    <location>
        <position position="346"/>
    </location>
    <ligand>
        <name>substrate</name>
    </ligand>
</feature>
<feature type="binding site" evidence="1">
    <location>
        <position position="484"/>
    </location>
    <ligand>
        <name>substrate</name>
    </ligand>
</feature>
<feature type="binding site" evidence="1">
    <location>
        <position position="487"/>
    </location>
    <ligand>
        <name>Mn(2+)</name>
        <dbReference type="ChEBI" id="CHEBI:29035"/>
        <label>3</label>
    </ligand>
</feature>
<feature type="binding site" evidence="1">
    <location>
        <position position="487"/>
    </location>
    <ligand>
        <name>substrate</name>
    </ligand>
</feature>
<feature type="binding site" evidence="1">
    <location>
        <position position="503"/>
    </location>
    <ligand>
        <name>substrate</name>
    </ligand>
</feature>
<comment type="catalytic activity">
    <reaction evidence="3">
        <text>(2E)-geranyl diphosphate = (4R)-limonene + diphosphate</text>
        <dbReference type="Rhea" id="RHEA:10940"/>
        <dbReference type="ChEBI" id="CHEBI:15382"/>
        <dbReference type="ChEBI" id="CHEBI:33019"/>
        <dbReference type="ChEBI" id="CHEBI:58057"/>
        <dbReference type="EC" id="4.2.3.20"/>
    </reaction>
</comment>
<comment type="cofactor">
    <cofactor evidence="1">
        <name>Mg(2+)</name>
        <dbReference type="ChEBI" id="CHEBI:18420"/>
    </cofactor>
    <cofactor evidence="1">
        <name>Mn(2+)</name>
        <dbReference type="ChEBI" id="CHEBI:29035"/>
    </cofactor>
    <text evidence="1">Binds 3 Mg(2+) or Mn(2+) ions per subunit.</text>
</comment>
<comment type="subcellular location">
    <subcellularLocation>
        <location evidence="2">Plastid</location>
        <location evidence="2">Chloroplast</location>
    </subcellularLocation>
</comment>
<comment type="domain">
    <text>The Asp-Asp-Xaa-Xaa-Asp/Glu (DDXXD/E) motif is important for the catalytic activity, presumably through binding to Mg(2+).</text>
</comment>
<comment type="similarity">
    <text evidence="5">Belongs to the terpene synthase family.</text>
</comment>
<accession>Q8L5K3</accession>
<proteinExistence type="evidence at transcript level"/>